<feature type="chain" id="PRO_1000069687" description="Pyridoxine/pyridoxamine 5'-phosphate oxidase">
    <location>
        <begin position="1"/>
        <end position="214"/>
    </location>
</feature>
<feature type="binding site" evidence="1">
    <location>
        <begin position="8"/>
        <end position="11"/>
    </location>
    <ligand>
        <name>substrate</name>
    </ligand>
</feature>
<feature type="binding site" evidence="1">
    <location>
        <begin position="61"/>
        <end position="66"/>
    </location>
    <ligand>
        <name>FMN</name>
        <dbReference type="ChEBI" id="CHEBI:58210"/>
    </ligand>
</feature>
<feature type="binding site" evidence="1">
    <location>
        <position position="66"/>
    </location>
    <ligand>
        <name>substrate</name>
    </ligand>
</feature>
<feature type="binding site" evidence="1">
    <location>
        <begin position="76"/>
        <end position="77"/>
    </location>
    <ligand>
        <name>FMN</name>
        <dbReference type="ChEBI" id="CHEBI:58210"/>
    </ligand>
</feature>
<feature type="binding site" evidence="1">
    <location>
        <position position="82"/>
    </location>
    <ligand>
        <name>FMN</name>
        <dbReference type="ChEBI" id="CHEBI:58210"/>
    </ligand>
</feature>
<feature type="binding site" evidence="1">
    <location>
        <position position="83"/>
    </location>
    <ligand>
        <name>FMN</name>
        <dbReference type="ChEBI" id="CHEBI:58210"/>
    </ligand>
</feature>
<feature type="binding site" evidence="1">
    <location>
        <position position="105"/>
    </location>
    <ligand>
        <name>FMN</name>
        <dbReference type="ChEBI" id="CHEBI:58210"/>
    </ligand>
</feature>
<feature type="binding site" evidence="1">
    <location>
        <position position="123"/>
    </location>
    <ligand>
        <name>substrate</name>
    </ligand>
</feature>
<feature type="binding site" evidence="1">
    <location>
        <position position="127"/>
    </location>
    <ligand>
        <name>substrate</name>
    </ligand>
</feature>
<feature type="binding site" evidence="1">
    <location>
        <position position="131"/>
    </location>
    <ligand>
        <name>substrate</name>
    </ligand>
</feature>
<feature type="binding site" evidence="1">
    <location>
        <begin position="140"/>
        <end position="141"/>
    </location>
    <ligand>
        <name>FMN</name>
        <dbReference type="ChEBI" id="CHEBI:58210"/>
    </ligand>
</feature>
<feature type="binding site" evidence="1">
    <location>
        <position position="184"/>
    </location>
    <ligand>
        <name>FMN</name>
        <dbReference type="ChEBI" id="CHEBI:58210"/>
    </ligand>
</feature>
<feature type="binding site" evidence="1">
    <location>
        <begin position="190"/>
        <end position="192"/>
    </location>
    <ligand>
        <name>substrate</name>
    </ligand>
</feature>
<feature type="binding site" evidence="1">
    <location>
        <position position="194"/>
    </location>
    <ligand>
        <name>FMN</name>
        <dbReference type="ChEBI" id="CHEBI:58210"/>
    </ligand>
</feature>
<keyword id="KW-0285">Flavoprotein</keyword>
<keyword id="KW-0288">FMN</keyword>
<keyword id="KW-0560">Oxidoreductase</keyword>
<keyword id="KW-0664">Pyridoxine biosynthesis</keyword>
<name>PDXH_BURP0</name>
<accession>A3NS64</accession>
<organism>
    <name type="scientific">Burkholderia pseudomallei (strain 1106a)</name>
    <dbReference type="NCBI Taxonomy" id="357348"/>
    <lineage>
        <taxon>Bacteria</taxon>
        <taxon>Pseudomonadati</taxon>
        <taxon>Pseudomonadota</taxon>
        <taxon>Betaproteobacteria</taxon>
        <taxon>Burkholderiales</taxon>
        <taxon>Burkholderiaceae</taxon>
        <taxon>Burkholderia</taxon>
        <taxon>pseudomallei group</taxon>
    </lineage>
</organism>
<evidence type="ECO:0000255" key="1">
    <source>
        <dbReference type="HAMAP-Rule" id="MF_01629"/>
    </source>
</evidence>
<protein>
    <recommendedName>
        <fullName evidence="1">Pyridoxine/pyridoxamine 5'-phosphate oxidase</fullName>
        <ecNumber evidence="1">1.4.3.5</ecNumber>
    </recommendedName>
    <alternativeName>
        <fullName evidence="1">PNP/PMP oxidase</fullName>
        <shortName evidence="1">PNPOx</shortName>
    </alternativeName>
    <alternativeName>
        <fullName evidence="1">Pyridoxal 5'-phosphate synthase</fullName>
    </alternativeName>
</protein>
<proteinExistence type="inferred from homology"/>
<dbReference type="EC" id="1.4.3.5" evidence="1"/>
<dbReference type="EMBL" id="CP000572">
    <property type="protein sequence ID" value="ABN89706.1"/>
    <property type="molecule type" value="Genomic_DNA"/>
</dbReference>
<dbReference type="RefSeq" id="WP_004522643.1">
    <property type="nucleotide sequence ID" value="NC_009076.1"/>
</dbReference>
<dbReference type="SMR" id="A3NS64"/>
<dbReference type="GeneID" id="93059361"/>
<dbReference type="KEGG" id="bpl:BURPS1106A_0904"/>
<dbReference type="HOGENOM" id="CLU_032263_2_2_4"/>
<dbReference type="UniPathway" id="UPA01068">
    <property type="reaction ID" value="UER00304"/>
</dbReference>
<dbReference type="UniPathway" id="UPA01068">
    <property type="reaction ID" value="UER00305"/>
</dbReference>
<dbReference type="Proteomes" id="UP000006738">
    <property type="component" value="Chromosome I"/>
</dbReference>
<dbReference type="GO" id="GO:0010181">
    <property type="term" value="F:FMN binding"/>
    <property type="evidence" value="ECO:0007669"/>
    <property type="project" value="UniProtKB-UniRule"/>
</dbReference>
<dbReference type="GO" id="GO:0004733">
    <property type="term" value="F:pyridoxamine phosphate oxidase activity"/>
    <property type="evidence" value="ECO:0007669"/>
    <property type="project" value="UniProtKB-UniRule"/>
</dbReference>
<dbReference type="GO" id="GO:0008615">
    <property type="term" value="P:pyridoxine biosynthetic process"/>
    <property type="evidence" value="ECO:0007669"/>
    <property type="project" value="UniProtKB-KW"/>
</dbReference>
<dbReference type="FunFam" id="2.30.110.10:FF:000005">
    <property type="entry name" value="NAD(P)H-hydrate epimerase"/>
    <property type="match status" value="1"/>
</dbReference>
<dbReference type="Gene3D" id="2.30.110.10">
    <property type="entry name" value="Electron Transport, Fmn-binding Protein, Chain A"/>
    <property type="match status" value="1"/>
</dbReference>
<dbReference type="HAMAP" id="MF_01629">
    <property type="entry name" value="PdxH"/>
    <property type="match status" value="1"/>
</dbReference>
<dbReference type="InterPro" id="IPR000659">
    <property type="entry name" value="Pyridox_Oxase"/>
</dbReference>
<dbReference type="InterPro" id="IPR019740">
    <property type="entry name" value="Pyridox_Oxase_CS"/>
</dbReference>
<dbReference type="InterPro" id="IPR011576">
    <property type="entry name" value="Pyridox_Oxase_N"/>
</dbReference>
<dbReference type="InterPro" id="IPR019576">
    <property type="entry name" value="Pyridoxamine_oxidase_dimer_C"/>
</dbReference>
<dbReference type="InterPro" id="IPR012349">
    <property type="entry name" value="Split_barrel_FMN-bd"/>
</dbReference>
<dbReference type="NCBIfam" id="TIGR00558">
    <property type="entry name" value="pdxH"/>
    <property type="match status" value="1"/>
</dbReference>
<dbReference type="NCBIfam" id="NF004231">
    <property type="entry name" value="PRK05679.1"/>
    <property type="match status" value="1"/>
</dbReference>
<dbReference type="PANTHER" id="PTHR10851:SF0">
    <property type="entry name" value="PYRIDOXINE-5'-PHOSPHATE OXIDASE"/>
    <property type="match status" value="1"/>
</dbReference>
<dbReference type="PANTHER" id="PTHR10851">
    <property type="entry name" value="PYRIDOXINE-5-PHOSPHATE OXIDASE"/>
    <property type="match status" value="1"/>
</dbReference>
<dbReference type="Pfam" id="PF10590">
    <property type="entry name" value="PNP_phzG_C"/>
    <property type="match status" value="1"/>
</dbReference>
<dbReference type="Pfam" id="PF01243">
    <property type="entry name" value="PNPOx_N"/>
    <property type="match status" value="1"/>
</dbReference>
<dbReference type="PIRSF" id="PIRSF000190">
    <property type="entry name" value="Pyd_amn-ph_oxd"/>
    <property type="match status" value="1"/>
</dbReference>
<dbReference type="SUPFAM" id="SSF50475">
    <property type="entry name" value="FMN-binding split barrel"/>
    <property type="match status" value="1"/>
</dbReference>
<dbReference type="PROSITE" id="PS01064">
    <property type="entry name" value="PYRIDOX_OXIDASE"/>
    <property type="match status" value="1"/>
</dbReference>
<gene>
    <name evidence="1" type="primary">pdxH</name>
    <name type="ordered locus">BURPS1106A_0904</name>
</gene>
<reference key="1">
    <citation type="journal article" date="2010" name="Genome Biol. Evol.">
        <title>Continuing evolution of Burkholderia mallei through genome reduction and large-scale rearrangements.</title>
        <authorList>
            <person name="Losada L."/>
            <person name="Ronning C.M."/>
            <person name="DeShazer D."/>
            <person name="Woods D."/>
            <person name="Fedorova N."/>
            <person name="Kim H.S."/>
            <person name="Shabalina S.A."/>
            <person name="Pearson T.R."/>
            <person name="Brinkac L."/>
            <person name="Tan P."/>
            <person name="Nandi T."/>
            <person name="Crabtree J."/>
            <person name="Badger J."/>
            <person name="Beckstrom-Sternberg S."/>
            <person name="Saqib M."/>
            <person name="Schutzer S.E."/>
            <person name="Keim P."/>
            <person name="Nierman W.C."/>
        </authorList>
    </citation>
    <scope>NUCLEOTIDE SEQUENCE [LARGE SCALE GENOMIC DNA]</scope>
    <source>
        <strain>1106a</strain>
    </source>
</reference>
<sequence>MTTLADLRTNYSRASLDAADVNPNPFVQFDVWFKEALDAQLPEPNTMTLATVDESGRPSARIVLIKGADERGFVFFTNYESRKGRELAHNPNAALLFYWIELERQVRVEGRIEKTSEEESDRYFASRPLGSRIGAWASEQSAVIESRALLEAREKEIGARFGENPPRPPHWGGYRLVPSSIEFWQGRPSRLHDRLLYTRDAASASGWKIARLAP</sequence>
<comment type="function">
    <text evidence="1">Catalyzes the oxidation of either pyridoxine 5'-phosphate (PNP) or pyridoxamine 5'-phosphate (PMP) into pyridoxal 5'-phosphate (PLP).</text>
</comment>
<comment type="catalytic activity">
    <reaction evidence="1">
        <text>pyridoxamine 5'-phosphate + O2 + H2O = pyridoxal 5'-phosphate + H2O2 + NH4(+)</text>
        <dbReference type="Rhea" id="RHEA:15817"/>
        <dbReference type="ChEBI" id="CHEBI:15377"/>
        <dbReference type="ChEBI" id="CHEBI:15379"/>
        <dbReference type="ChEBI" id="CHEBI:16240"/>
        <dbReference type="ChEBI" id="CHEBI:28938"/>
        <dbReference type="ChEBI" id="CHEBI:58451"/>
        <dbReference type="ChEBI" id="CHEBI:597326"/>
        <dbReference type="EC" id="1.4.3.5"/>
    </reaction>
</comment>
<comment type="catalytic activity">
    <reaction evidence="1">
        <text>pyridoxine 5'-phosphate + O2 = pyridoxal 5'-phosphate + H2O2</text>
        <dbReference type="Rhea" id="RHEA:15149"/>
        <dbReference type="ChEBI" id="CHEBI:15379"/>
        <dbReference type="ChEBI" id="CHEBI:16240"/>
        <dbReference type="ChEBI" id="CHEBI:58589"/>
        <dbReference type="ChEBI" id="CHEBI:597326"/>
        <dbReference type="EC" id="1.4.3.5"/>
    </reaction>
</comment>
<comment type="cofactor">
    <cofactor evidence="1">
        <name>FMN</name>
        <dbReference type="ChEBI" id="CHEBI:58210"/>
    </cofactor>
    <text evidence="1">Binds 1 FMN per subunit.</text>
</comment>
<comment type="pathway">
    <text evidence="1">Cofactor metabolism; pyridoxal 5'-phosphate salvage; pyridoxal 5'-phosphate from pyridoxamine 5'-phosphate: step 1/1.</text>
</comment>
<comment type="pathway">
    <text evidence="1">Cofactor metabolism; pyridoxal 5'-phosphate salvage; pyridoxal 5'-phosphate from pyridoxine 5'-phosphate: step 1/1.</text>
</comment>
<comment type="subunit">
    <text evidence="1">Homodimer.</text>
</comment>
<comment type="similarity">
    <text evidence="1">Belongs to the pyridoxamine 5'-phosphate oxidase family.</text>
</comment>